<accession>B8GNX1</accession>
<name>DNAK_THISH</name>
<gene>
    <name evidence="1" type="primary">dnaK</name>
    <name type="ordered locus">Tgr7_0972</name>
</gene>
<reference key="1">
    <citation type="journal article" date="2011" name="Stand. Genomic Sci.">
        <title>Complete genome sequence of 'Thioalkalivibrio sulfidophilus' HL-EbGr7.</title>
        <authorList>
            <person name="Muyzer G."/>
            <person name="Sorokin D.Y."/>
            <person name="Mavromatis K."/>
            <person name="Lapidus A."/>
            <person name="Clum A."/>
            <person name="Ivanova N."/>
            <person name="Pati A."/>
            <person name="d'Haeseleer P."/>
            <person name="Woyke T."/>
            <person name="Kyrpides N.C."/>
        </authorList>
    </citation>
    <scope>NUCLEOTIDE SEQUENCE [LARGE SCALE GENOMIC DNA]</scope>
    <source>
        <strain>HL-EbGR7</strain>
    </source>
</reference>
<dbReference type="EMBL" id="CP001339">
    <property type="protein sequence ID" value="ACL72060.1"/>
    <property type="molecule type" value="Genomic_DNA"/>
</dbReference>
<dbReference type="RefSeq" id="WP_012637544.1">
    <property type="nucleotide sequence ID" value="NC_011901.1"/>
</dbReference>
<dbReference type="SMR" id="B8GNX1"/>
<dbReference type="STRING" id="396588.Tgr7_0972"/>
<dbReference type="KEGG" id="tgr:Tgr7_0972"/>
<dbReference type="eggNOG" id="COG0443">
    <property type="taxonomic scope" value="Bacteria"/>
</dbReference>
<dbReference type="HOGENOM" id="CLU_005965_2_1_6"/>
<dbReference type="OrthoDB" id="9766019at2"/>
<dbReference type="Proteomes" id="UP000002383">
    <property type="component" value="Chromosome"/>
</dbReference>
<dbReference type="GO" id="GO:0005524">
    <property type="term" value="F:ATP binding"/>
    <property type="evidence" value="ECO:0007669"/>
    <property type="project" value="UniProtKB-UniRule"/>
</dbReference>
<dbReference type="GO" id="GO:0140662">
    <property type="term" value="F:ATP-dependent protein folding chaperone"/>
    <property type="evidence" value="ECO:0007669"/>
    <property type="project" value="InterPro"/>
</dbReference>
<dbReference type="GO" id="GO:0051082">
    <property type="term" value="F:unfolded protein binding"/>
    <property type="evidence" value="ECO:0007669"/>
    <property type="project" value="InterPro"/>
</dbReference>
<dbReference type="CDD" id="cd10234">
    <property type="entry name" value="ASKHA_NBD_HSP70_DnaK-like"/>
    <property type="match status" value="1"/>
</dbReference>
<dbReference type="FunFam" id="2.60.34.10:FF:000014">
    <property type="entry name" value="Chaperone protein DnaK HSP70"/>
    <property type="match status" value="1"/>
</dbReference>
<dbReference type="FunFam" id="1.20.1270.10:FF:000001">
    <property type="entry name" value="Molecular chaperone DnaK"/>
    <property type="match status" value="1"/>
</dbReference>
<dbReference type="FunFam" id="3.30.420.40:FF:000004">
    <property type="entry name" value="Molecular chaperone DnaK"/>
    <property type="match status" value="1"/>
</dbReference>
<dbReference type="FunFam" id="3.90.640.10:FF:000003">
    <property type="entry name" value="Molecular chaperone DnaK"/>
    <property type="match status" value="1"/>
</dbReference>
<dbReference type="Gene3D" id="1.20.1270.10">
    <property type="match status" value="1"/>
</dbReference>
<dbReference type="Gene3D" id="3.30.420.40">
    <property type="match status" value="2"/>
</dbReference>
<dbReference type="Gene3D" id="3.90.640.10">
    <property type="entry name" value="Actin, Chain A, domain 4"/>
    <property type="match status" value="1"/>
</dbReference>
<dbReference type="Gene3D" id="2.60.34.10">
    <property type="entry name" value="Substrate Binding Domain Of DNAk, Chain A, domain 1"/>
    <property type="match status" value="1"/>
</dbReference>
<dbReference type="HAMAP" id="MF_00332">
    <property type="entry name" value="DnaK"/>
    <property type="match status" value="1"/>
</dbReference>
<dbReference type="InterPro" id="IPR043129">
    <property type="entry name" value="ATPase_NBD"/>
</dbReference>
<dbReference type="InterPro" id="IPR012725">
    <property type="entry name" value="Chaperone_DnaK"/>
</dbReference>
<dbReference type="InterPro" id="IPR018181">
    <property type="entry name" value="Heat_shock_70_CS"/>
</dbReference>
<dbReference type="InterPro" id="IPR029048">
    <property type="entry name" value="HSP70_C_sf"/>
</dbReference>
<dbReference type="InterPro" id="IPR029047">
    <property type="entry name" value="HSP70_peptide-bd_sf"/>
</dbReference>
<dbReference type="InterPro" id="IPR013126">
    <property type="entry name" value="Hsp_70_fam"/>
</dbReference>
<dbReference type="NCBIfam" id="NF001413">
    <property type="entry name" value="PRK00290.1"/>
    <property type="match status" value="1"/>
</dbReference>
<dbReference type="NCBIfam" id="NF003520">
    <property type="entry name" value="PRK05183.1"/>
    <property type="match status" value="1"/>
</dbReference>
<dbReference type="NCBIfam" id="TIGR02350">
    <property type="entry name" value="prok_dnaK"/>
    <property type="match status" value="1"/>
</dbReference>
<dbReference type="PANTHER" id="PTHR19375">
    <property type="entry name" value="HEAT SHOCK PROTEIN 70KDA"/>
    <property type="match status" value="1"/>
</dbReference>
<dbReference type="Pfam" id="PF00012">
    <property type="entry name" value="HSP70"/>
    <property type="match status" value="1"/>
</dbReference>
<dbReference type="PRINTS" id="PR00301">
    <property type="entry name" value="HEATSHOCK70"/>
</dbReference>
<dbReference type="SUPFAM" id="SSF53067">
    <property type="entry name" value="Actin-like ATPase domain"/>
    <property type="match status" value="2"/>
</dbReference>
<dbReference type="SUPFAM" id="SSF100934">
    <property type="entry name" value="Heat shock protein 70kD (HSP70), C-terminal subdomain"/>
    <property type="match status" value="1"/>
</dbReference>
<dbReference type="SUPFAM" id="SSF100920">
    <property type="entry name" value="Heat shock protein 70kD (HSP70), peptide-binding domain"/>
    <property type="match status" value="1"/>
</dbReference>
<dbReference type="PROSITE" id="PS00297">
    <property type="entry name" value="HSP70_1"/>
    <property type="match status" value="1"/>
</dbReference>
<dbReference type="PROSITE" id="PS00329">
    <property type="entry name" value="HSP70_2"/>
    <property type="match status" value="1"/>
</dbReference>
<dbReference type="PROSITE" id="PS01036">
    <property type="entry name" value="HSP70_3"/>
    <property type="match status" value="1"/>
</dbReference>
<keyword id="KW-0067">ATP-binding</keyword>
<keyword id="KW-0143">Chaperone</keyword>
<keyword id="KW-0547">Nucleotide-binding</keyword>
<keyword id="KW-0597">Phosphoprotein</keyword>
<keyword id="KW-1185">Reference proteome</keyword>
<keyword id="KW-0346">Stress response</keyword>
<proteinExistence type="inferred from homology"/>
<feature type="chain" id="PRO_1000133169" description="Chaperone protein DnaK">
    <location>
        <begin position="1"/>
        <end position="641"/>
    </location>
</feature>
<feature type="region of interest" description="Disordered" evidence="2">
    <location>
        <begin position="577"/>
        <end position="641"/>
    </location>
</feature>
<feature type="compositionally biased region" description="Basic and acidic residues" evidence="2">
    <location>
        <begin position="577"/>
        <end position="590"/>
    </location>
</feature>
<feature type="compositionally biased region" description="Low complexity" evidence="2">
    <location>
        <begin position="617"/>
        <end position="626"/>
    </location>
</feature>
<feature type="compositionally biased region" description="Acidic residues" evidence="2">
    <location>
        <begin position="627"/>
        <end position="641"/>
    </location>
</feature>
<feature type="modified residue" description="Phosphothreonine; by autocatalysis" evidence="1">
    <location>
        <position position="199"/>
    </location>
</feature>
<organism>
    <name type="scientific">Thioalkalivibrio sulfidiphilus (strain HL-EbGR7)</name>
    <dbReference type="NCBI Taxonomy" id="396588"/>
    <lineage>
        <taxon>Bacteria</taxon>
        <taxon>Pseudomonadati</taxon>
        <taxon>Pseudomonadota</taxon>
        <taxon>Gammaproteobacteria</taxon>
        <taxon>Chromatiales</taxon>
        <taxon>Ectothiorhodospiraceae</taxon>
        <taxon>Thioalkalivibrio</taxon>
    </lineage>
</organism>
<sequence>MGKIIGIDLGTTNSCVAVMEGDKAKVIENAEGARTTPSIVAFTEDGEVLVGQAAKRQAVTNPKNTLFAVKRLIGRRFEEPEVQKDIKLVPYEIFKADNGDAWVRVRDKKMAPPEISARVLQKMKKTAEDYLGEPVTEAVITVPAYFNDSQRQATKDAGKIAGLEVKRIINEPTAAALAYGLDKKRGDSKVAVYDLGGGTFDVSIIEIAEVDGEHQFEVLATNGDTFLGGEDFDMRLIDYLVEEFKKEQGIDLKGDPLAMQRLKESAEKAKIELSSSQQTDVNLPYITADASGPKHMNIKVTRAKLESLVEELIKRTIEPCKVALKDAGLSVSDIDDVILVGGQTRMPKVQDAVKNFFGKEPRKDVNPDEAVAVGAAIQAGVLGGEVKDVLLLDVTPLSLGIETLGGVMTKLIEKNTTIPTKATQVFSTADDNQTAVTVHVLQGEREMASANKSLGRFDLTDIPPAPRGVPQVEVMFDIDANGILNVSAKDKATGKQQSIVIKASSGLSDEEVERMVRDAEAHADEDKRFHELVAARNQADNLVHATEKSLKELGDQVEAGEKQAIESALSELREAMKGDNKDEIETRTQKLAEASGKLAERVYAKQSAEGGAGEGAGAEQASAQQDDVVDAEFEEVDDKKK</sequence>
<protein>
    <recommendedName>
        <fullName evidence="1">Chaperone protein DnaK</fullName>
    </recommendedName>
    <alternativeName>
        <fullName evidence="1">HSP70</fullName>
    </alternativeName>
    <alternativeName>
        <fullName evidence="1">Heat shock 70 kDa protein</fullName>
    </alternativeName>
    <alternativeName>
        <fullName evidence="1">Heat shock protein 70</fullName>
    </alternativeName>
</protein>
<comment type="function">
    <text evidence="1">Acts as a chaperone.</text>
</comment>
<comment type="induction">
    <text evidence="1">By stress conditions e.g. heat shock.</text>
</comment>
<comment type="similarity">
    <text evidence="1">Belongs to the heat shock protein 70 family.</text>
</comment>
<evidence type="ECO:0000255" key="1">
    <source>
        <dbReference type="HAMAP-Rule" id="MF_00332"/>
    </source>
</evidence>
<evidence type="ECO:0000256" key="2">
    <source>
        <dbReference type="SAM" id="MobiDB-lite"/>
    </source>
</evidence>